<comment type="catalytic activity">
    <reaction evidence="1">
        <text>(6R)-10-formyltetrahydrofolate + 5-amino-1-(5-phospho-beta-D-ribosyl)imidazole-4-carboxamide = 5-formamido-1-(5-phospho-D-ribosyl)imidazole-4-carboxamide + (6S)-5,6,7,8-tetrahydrofolate</text>
        <dbReference type="Rhea" id="RHEA:22192"/>
        <dbReference type="ChEBI" id="CHEBI:57453"/>
        <dbReference type="ChEBI" id="CHEBI:58467"/>
        <dbReference type="ChEBI" id="CHEBI:58475"/>
        <dbReference type="ChEBI" id="CHEBI:195366"/>
        <dbReference type="EC" id="2.1.2.3"/>
    </reaction>
</comment>
<comment type="catalytic activity">
    <reaction evidence="1">
        <text>IMP + H2O = 5-formamido-1-(5-phospho-D-ribosyl)imidazole-4-carboxamide</text>
        <dbReference type="Rhea" id="RHEA:18445"/>
        <dbReference type="ChEBI" id="CHEBI:15377"/>
        <dbReference type="ChEBI" id="CHEBI:58053"/>
        <dbReference type="ChEBI" id="CHEBI:58467"/>
        <dbReference type="EC" id="3.5.4.10"/>
    </reaction>
</comment>
<comment type="pathway">
    <text evidence="1">Purine metabolism; IMP biosynthesis via de novo pathway; 5-formamido-1-(5-phospho-D-ribosyl)imidazole-4-carboxamide from 5-amino-1-(5-phospho-D-ribosyl)imidazole-4-carboxamide (10-formyl THF route): step 1/1.</text>
</comment>
<comment type="pathway">
    <text evidence="1">Purine metabolism; IMP biosynthesis via de novo pathway; IMP from 5-formamido-1-(5-phospho-D-ribosyl)imidazole-4-carboxamide: step 1/1.</text>
</comment>
<comment type="domain">
    <text evidence="1">The IMP cyclohydrolase activity resides in the N-terminal region.</text>
</comment>
<comment type="similarity">
    <text evidence="1">Belongs to the PurH family.</text>
</comment>
<feature type="chain" id="PRO_1000096077" description="Bifunctional purine biosynthesis protein PurH">
    <location>
        <begin position="1"/>
        <end position="514"/>
    </location>
</feature>
<feature type="domain" description="MGS-like" evidence="2">
    <location>
        <begin position="1"/>
        <end position="146"/>
    </location>
</feature>
<dbReference type="EC" id="2.1.2.3" evidence="1"/>
<dbReference type="EC" id="3.5.4.10" evidence="1"/>
<dbReference type="EMBL" id="CP001037">
    <property type="protein sequence ID" value="ACC84589.1"/>
    <property type="molecule type" value="Genomic_DNA"/>
</dbReference>
<dbReference type="RefSeq" id="WP_012412528.1">
    <property type="nucleotide sequence ID" value="NC_010628.1"/>
</dbReference>
<dbReference type="SMR" id="B2IX54"/>
<dbReference type="STRING" id="63737.Npun_R6316"/>
<dbReference type="EnsemblBacteria" id="ACC84589">
    <property type="protein sequence ID" value="ACC84589"/>
    <property type="gene ID" value="Npun_R6316"/>
</dbReference>
<dbReference type="KEGG" id="npu:Npun_R6316"/>
<dbReference type="eggNOG" id="COG0138">
    <property type="taxonomic scope" value="Bacteria"/>
</dbReference>
<dbReference type="HOGENOM" id="CLU_016316_5_2_3"/>
<dbReference type="OrthoDB" id="9802065at2"/>
<dbReference type="PhylomeDB" id="B2IX54"/>
<dbReference type="UniPathway" id="UPA00074">
    <property type="reaction ID" value="UER00133"/>
</dbReference>
<dbReference type="UniPathway" id="UPA00074">
    <property type="reaction ID" value="UER00135"/>
</dbReference>
<dbReference type="Proteomes" id="UP000001191">
    <property type="component" value="Chromosome"/>
</dbReference>
<dbReference type="GO" id="GO:0005829">
    <property type="term" value="C:cytosol"/>
    <property type="evidence" value="ECO:0007669"/>
    <property type="project" value="TreeGrafter"/>
</dbReference>
<dbReference type="GO" id="GO:0003937">
    <property type="term" value="F:IMP cyclohydrolase activity"/>
    <property type="evidence" value="ECO:0007669"/>
    <property type="project" value="UniProtKB-UniRule"/>
</dbReference>
<dbReference type="GO" id="GO:0004643">
    <property type="term" value="F:phosphoribosylaminoimidazolecarboxamide formyltransferase activity"/>
    <property type="evidence" value="ECO:0007669"/>
    <property type="project" value="UniProtKB-UniRule"/>
</dbReference>
<dbReference type="GO" id="GO:0006189">
    <property type="term" value="P:'de novo' IMP biosynthetic process"/>
    <property type="evidence" value="ECO:0007669"/>
    <property type="project" value="UniProtKB-UniRule"/>
</dbReference>
<dbReference type="CDD" id="cd01421">
    <property type="entry name" value="IMPCH"/>
    <property type="match status" value="1"/>
</dbReference>
<dbReference type="FunFam" id="3.40.140.20:FF:000001">
    <property type="entry name" value="Bifunctional purine biosynthesis protein PurH"/>
    <property type="match status" value="1"/>
</dbReference>
<dbReference type="FunFam" id="3.40.50.1380:FF:000001">
    <property type="entry name" value="Bifunctional purine biosynthesis protein PurH"/>
    <property type="match status" value="1"/>
</dbReference>
<dbReference type="Gene3D" id="3.40.140.20">
    <property type="match status" value="2"/>
</dbReference>
<dbReference type="Gene3D" id="3.40.50.1380">
    <property type="entry name" value="Methylglyoxal synthase-like domain"/>
    <property type="match status" value="1"/>
</dbReference>
<dbReference type="HAMAP" id="MF_00139">
    <property type="entry name" value="PurH"/>
    <property type="match status" value="1"/>
</dbReference>
<dbReference type="InterPro" id="IPR024051">
    <property type="entry name" value="AICAR_Tfase_dup_dom_sf"/>
</dbReference>
<dbReference type="InterPro" id="IPR016193">
    <property type="entry name" value="Cytidine_deaminase-like"/>
</dbReference>
<dbReference type="InterPro" id="IPR011607">
    <property type="entry name" value="MGS-like_dom"/>
</dbReference>
<dbReference type="InterPro" id="IPR036914">
    <property type="entry name" value="MGS-like_dom_sf"/>
</dbReference>
<dbReference type="InterPro" id="IPR002695">
    <property type="entry name" value="PurH-like"/>
</dbReference>
<dbReference type="NCBIfam" id="NF002049">
    <property type="entry name" value="PRK00881.1"/>
    <property type="match status" value="1"/>
</dbReference>
<dbReference type="NCBIfam" id="TIGR00355">
    <property type="entry name" value="purH"/>
    <property type="match status" value="1"/>
</dbReference>
<dbReference type="PANTHER" id="PTHR11692:SF0">
    <property type="entry name" value="BIFUNCTIONAL PURINE BIOSYNTHESIS PROTEIN ATIC"/>
    <property type="match status" value="1"/>
</dbReference>
<dbReference type="PANTHER" id="PTHR11692">
    <property type="entry name" value="BIFUNCTIONAL PURINE BIOSYNTHESIS PROTEIN PURH"/>
    <property type="match status" value="1"/>
</dbReference>
<dbReference type="Pfam" id="PF01808">
    <property type="entry name" value="AICARFT_IMPCHas"/>
    <property type="match status" value="1"/>
</dbReference>
<dbReference type="Pfam" id="PF02142">
    <property type="entry name" value="MGS"/>
    <property type="match status" value="1"/>
</dbReference>
<dbReference type="PIRSF" id="PIRSF000414">
    <property type="entry name" value="AICARFT_IMPCHas"/>
    <property type="match status" value="1"/>
</dbReference>
<dbReference type="SMART" id="SM00798">
    <property type="entry name" value="AICARFT_IMPCHas"/>
    <property type="match status" value="1"/>
</dbReference>
<dbReference type="SMART" id="SM00851">
    <property type="entry name" value="MGS"/>
    <property type="match status" value="1"/>
</dbReference>
<dbReference type="SUPFAM" id="SSF53927">
    <property type="entry name" value="Cytidine deaminase-like"/>
    <property type="match status" value="1"/>
</dbReference>
<dbReference type="SUPFAM" id="SSF52335">
    <property type="entry name" value="Methylglyoxal synthase-like"/>
    <property type="match status" value="1"/>
</dbReference>
<dbReference type="PROSITE" id="PS51855">
    <property type="entry name" value="MGS"/>
    <property type="match status" value="1"/>
</dbReference>
<keyword id="KW-0378">Hydrolase</keyword>
<keyword id="KW-0511">Multifunctional enzyme</keyword>
<keyword id="KW-0658">Purine biosynthesis</keyword>
<keyword id="KW-1185">Reference proteome</keyword>
<keyword id="KW-0808">Transferase</keyword>
<proteinExistence type="inferred from homology"/>
<reference key="1">
    <citation type="journal article" date="2013" name="Plant Physiol.">
        <title>A Nostoc punctiforme Sugar Transporter Necessary to Establish a Cyanobacterium-Plant Symbiosis.</title>
        <authorList>
            <person name="Ekman M."/>
            <person name="Picossi S."/>
            <person name="Campbell E.L."/>
            <person name="Meeks J.C."/>
            <person name="Flores E."/>
        </authorList>
    </citation>
    <scope>NUCLEOTIDE SEQUENCE [LARGE SCALE GENOMIC DNA]</scope>
    <source>
        <strain>ATCC 29133 / PCC 73102</strain>
    </source>
</reference>
<evidence type="ECO:0000255" key="1">
    <source>
        <dbReference type="HAMAP-Rule" id="MF_00139"/>
    </source>
</evidence>
<evidence type="ECO:0000255" key="2">
    <source>
        <dbReference type="PROSITE-ProRule" id="PRU01202"/>
    </source>
</evidence>
<sequence>MARLALLSVSNKTGIIDLARSLVEEFDFDLISSGGTAQALKDAGLPVTKVADYTGSPEILGGRVKTLHPRIHGGILARRDVPQDITDLENNQIRPIDLVVVNLYPFEETIAKPGVTLLEAVEQIDIGGPAMLRASSKNFAHLAVLCDPAQYDEYLEELRQNNGVASLEFRQKAALKGFSHTASYDQAIAQALTCQFASYLADTQQYTLSGTQLQSLRYGENPHQPATWYQTGTTPTGWAAATKLQGKELSYNNLVDLEAARRIIAEFTDTPAATIIKHTNPCGTALGSSISEAYKKAFNADSTSAFGGIVALNRPIDAATASELTKTFLECVVAPSCEAEAQEILAKKSNVRVLTLADLSSGPKDTVKAIAGGFLVQTADDIVADTSQWQVVTERQPTDSELAELLFAWKVCKHVKSNAIVVTSDRTTLGVGAGQMNRVGSVKIALEQAGEKAKGAILASDGFFPFDDSVRTAAAAGITAIVQPGGSLRDKDSIKAANDLGLLMVLTGVRHFLH</sequence>
<organism>
    <name type="scientific">Nostoc punctiforme (strain ATCC 29133 / PCC 73102)</name>
    <dbReference type="NCBI Taxonomy" id="63737"/>
    <lineage>
        <taxon>Bacteria</taxon>
        <taxon>Bacillati</taxon>
        <taxon>Cyanobacteriota</taxon>
        <taxon>Cyanophyceae</taxon>
        <taxon>Nostocales</taxon>
        <taxon>Nostocaceae</taxon>
        <taxon>Nostoc</taxon>
    </lineage>
</organism>
<accession>B2IX54</accession>
<name>PUR9_NOSP7</name>
<gene>
    <name evidence="1" type="primary">purH</name>
    <name type="ordered locus">Npun_R6316</name>
</gene>
<protein>
    <recommendedName>
        <fullName evidence="1">Bifunctional purine biosynthesis protein PurH</fullName>
    </recommendedName>
    <domain>
        <recommendedName>
            <fullName evidence="1">Phosphoribosylaminoimidazolecarboxamide formyltransferase</fullName>
            <ecNumber evidence="1">2.1.2.3</ecNumber>
        </recommendedName>
        <alternativeName>
            <fullName evidence="1">AICAR transformylase</fullName>
        </alternativeName>
    </domain>
    <domain>
        <recommendedName>
            <fullName evidence="1">IMP cyclohydrolase</fullName>
            <ecNumber evidence="1">3.5.4.10</ecNumber>
        </recommendedName>
        <alternativeName>
            <fullName evidence="1">ATIC</fullName>
        </alternativeName>
        <alternativeName>
            <fullName evidence="1">IMP synthase</fullName>
        </alternativeName>
        <alternativeName>
            <fullName evidence="1">Inosinicase</fullName>
        </alternativeName>
    </domain>
</protein>